<name>GRPE_SHEFN</name>
<protein>
    <recommendedName>
        <fullName evidence="1">Protein GrpE</fullName>
    </recommendedName>
    <alternativeName>
        <fullName evidence="1">HSP-70 cofactor</fullName>
    </alternativeName>
</protein>
<gene>
    <name evidence="1" type="primary">grpE</name>
    <name type="ordered locus">Sfri_2791</name>
</gene>
<sequence>MSNESNNTSQDQVEEAVTPEIVVDEASLMDELTQANFRIEELEQLLAESETALAERKDVEMRAAAETQNIRTRAAKDVEQARKFALEKFANELLPVIDNMERALQGTNPEDEATKAIYEGVELTMKGFLTSVEKFGVTQVNPQGQAFNPEHHQAIGMQPSAEYPANTVMMVMQKGYLLNDRLLRPAMVMVSQGGGSVDVEA</sequence>
<dbReference type="EMBL" id="CP000447">
    <property type="protein sequence ID" value="ABI72631.1"/>
    <property type="molecule type" value="Genomic_DNA"/>
</dbReference>
<dbReference type="RefSeq" id="WP_011638240.1">
    <property type="nucleotide sequence ID" value="NC_008345.1"/>
</dbReference>
<dbReference type="SMR" id="Q07ZD3"/>
<dbReference type="STRING" id="318167.Sfri_2791"/>
<dbReference type="KEGG" id="sfr:Sfri_2791"/>
<dbReference type="eggNOG" id="COG0576">
    <property type="taxonomic scope" value="Bacteria"/>
</dbReference>
<dbReference type="HOGENOM" id="CLU_057217_6_0_6"/>
<dbReference type="OrthoDB" id="9789811at2"/>
<dbReference type="Proteomes" id="UP000000684">
    <property type="component" value="Chromosome"/>
</dbReference>
<dbReference type="GO" id="GO:0005829">
    <property type="term" value="C:cytosol"/>
    <property type="evidence" value="ECO:0007669"/>
    <property type="project" value="TreeGrafter"/>
</dbReference>
<dbReference type="GO" id="GO:0000774">
    <property type="term" value="F:adenyl-nucleotide exchange factor activity"/>
    <property type="evidence" value="ECO:0007669"/>
    <property type="project" value="InterPro"/>
</dbReference>
<dbReference type="GO" id="GO:0042803">
    <property type="term" value="F:protein homodimerization activity"/>
    <property type="evidence" value="ECO:0007669"/>
    <property type="project" value="InterPro"/>
</dbReference>
<dbReference type="GO" id="GO:0051087">
    <property type="term" value="F:protein-folding chaperone binding"/>
    <property type="evidence" value="ECO:0007669"/>
    <property type="project" value="InterPro"/>
</dbReference>
<dbReference type="GO" id="GO:0051082">
    <property type="term" value="F:unfolded protein binding"/>
    <property type="evidence" value="ECO:0007669"/>
    <property type="project" value="TreeGrafter"/>
</dbReference>
<dbReference type="GO" id="GO:0006457">
    <property type="term" value="P:protein folding"/>
    <property type="evidence" value="ECO:0007669"/>
    <property type="project" value="InterPro"/>
</dbReference>
<dbReference type="CDD" id="cd00446">
    <property type="entry name" value="GrpE"/>
    <property type="match status" value="1"/>
</dbReference>
<dbReference type="FunFam" id="2.30.22.10:FF:000001">
    <property type="entry name" value="Protein GrpE"/>
    <property type="match status" value="1"/>
</dbReference>
<dbReference type="Gene3D" id="3.90.20.20">
    <property type="match status" value="1"/>
</dbReference>
<dbReference type="Gene3D" id="2.30.22.10">
    <property type="entry name" value="Head domain of nucleotide exchange factor GrpE"/>
    <property type="match status" value="1"/>
</dbReference>
<dbReference type="HAMAP" id="MF_01151">
    <property type="entry name" value="GrpE"/>
    <property type="match status" value="1"/>
</dbReference>
<dbReference type="InterPro" id="IPR000740">
    <property type="entry name" value="GrpE"/>
</dbReference>
<dbReference type="InterPro" id="IPR013805">
    <property type="entry name" value="GrpE_coiled_coil"/>
</dbReference>
<dbReference type="InterPro" id="IPR009012">
    <property type="entry name" value="GrpE_head"/>
</dbReference>
<dbReference type="NCBIfam" id="NF010737">
    <property type="entry name" value="PRK14139.1"/>
    <property type="match status" value="1"/>
</dbReference>
<dbReference type="NCBIfam" id="NF010738">
    <property type="entry name" value="PRK14140.1"/>
    <property type="match status" value="1"/>
</dbReference>
<dbReference type="NCBIfam" id="NF010748">
    <property type="entry name" value="PRK14150.1"/>
    <property type="match status" value="1"/>
</dbReference>
<dbReference type="PANTHER" id="PTHR21237">
    <property type="entry name" value="GRPE PROTEIN"/>
    <property type="match status" value="1"/>
</dbReference>
<dbReference type="PANTHER" id="PTHR21237:SF23">
    <property type="entry name" value="GRPE PROTEIN HOMOLOG, MITOCHONDRIAL"/>
    <property type="match status" value="1"/>
</dbReference>
<dbReference type="Pfam" id="PF01025">
    <property type="entry name" value="GrpE"/>
    <property type="match status" value="1"/>
</dbReference>
<dbReference type="PRINTS" id="PR00773">
    <property type="entry name" value="GRPEPROTEIN"/>
</dbReference>
<dbReference type="SUPFAM" id="SSF58014">
    <property type="entry name" value="Coiled-coil domain of nucleotide exchange factor GrpE"/>
    <property type="match status" value="1"/>
</dbReference>
<dbReference type="SUPFAM" id="SSF51064">
    <property type="entry name" value="Head domain of nucleotide exchange factor GrpE"/>
    <property type="match status" value="1"/>
</dbReference>
<dbReference type="PROSITE" id="PS01071">
    <property type="entry name" value="GRPE"/>
    <property type="match status" value="1"/>
</dbReference>
<accession>Q07ZD3</accession>
<feature type="chain" id="PRO_1000053637" description="Protein GrpE">
    <location>
        <begin position="1"/>
        <end position="201"/>
    </location>
</feature>
<proteinExistence type="inferred from homology"/>
<keyword id="KW-0143">Chaperone</keyword>
<keyword id="KW-0963">Cytoplasm</keyword>
<keyword id="KW-1185">Reference proteome</keyword>
<keyword id="KW-0346">Stress response</keyword>
<evidence type="ECO:0000255" key="1">
    <source>
        <dbReference type="HAMAP-Rule" id="MF_01151"/>
    </source>
</evidence>
<reference key="1">
    <citation type="submission" date="2006-08" db="EMBL/GenBank/DDBJ databases">
        <title>Complete sequence of Shewanella frigidimarina NCIMB 400.</title>
        <authorList>
            <consortium name="US DOE Joint Genome Institute"/>
            <person name="Copeland A."/>
            <person name="Lucas S."/>
            <person name="Lapidus A."/>
            <person name="Barry K."/>
            <person name="Detter J.C."/>
            <person name="Glavina del Rio T."/>
            <person name="Hammon N."/>
            <person name="Israni S."/>
            <person name="Dalin E."/>
            <person name="Tice H."/>
            <person name="Pitluck S."/>
            <person name="Fredrickson J.K."/>
            <person name="Kolker E."/>
            <person name="McCuel L.A."/>
            <person name="DiChristina T."/>
            <person name="Nealson K.H."/>
            <person name="Newman D."/>
            <person name="Tiedje J.M."/>
            <person name="Zhou J."/>
            <person name="Romine M.F."/>
            <person name="Culley D.E."/>
            <person name="Serres M."/>
            <person name="Chertkov O."/>
            <person name="Brettin T."/>
            <person name="Bruce D."/>
            <person name="Han C."/>
            <person name="Tapia R."/>
            <person name="Gilna P."/>
            <person name="Schmutz J."/>
            <person name="Larimer F."/>
            <person name="Land M."/>
            <person name="Hauser L."/>
            <person name="Kyrpides N."/>
            <person name="Mikhailova N."/>
            <person name="Richardson P."/>
        </authorList>
    </citation>
    <scope>NUCLEOTIDE SEQUENCE [LARGE SCALE GENOMIC DNA]</scope>
    <source>
        <strain>NCIMB 400</strain>
    </source>
</reference>
<organism>
    <name type="scientific">Shewanella frigidimarina (strain NCIMB 400)</name>
    <dbReference type="NCBI Taxonomy" id="318167"/>
    <lineage>
        <taxon>Bacteria</taxon>
        <taxon>Pseudomonadati</taxon>
        <taxon>Pseudomonadota</taxon>
        <taxon>Gammaproteobacteria</taxon>
        <taxon>Alteromonadales</taxon>
        <taxon>Shewanellaceae</taxon>
        <taxon>Shewanella</taxon>
    </lineage>
</organism>
<comment type="function">
    <text evidence="1">Participates actively in the response to hyperosmotic and heat shock by preventing the aggregation of stress-denatured proteins, in association with DnaK and GrpE. It is the nucleotide exchange factor for DnaK and may function as a thermosensor. Unfolded proteins bind initially to DnaJ; upon interaction with the DnaJ-bound protein, DnaK hydrolyzes its bound ATP, resulting in the formation of a stable complex. GrpE releases ADP from DnaK; ATP binding to DnaK triggers the release of the substrate protein, thus completing the reaction cycle. Several rounds of ATP-dependent interactions between DnaJ, DnaK and GrpE are required for fully efficient folding.</text>
</comment>
<comment type="subunit">
    <text evidence="1">Homodimer.</text>
</comment>
<comment type="subcellular location">
    <subcellularLocation>
        <location evidence="1">Cytoplasm</location>
    </subcellularLocation>
</comment>
<comment type="similarity">
    <text evidence="1">Belongs to the GrpE family.</text>
</comment>